<accession>Q9ABW2</accession>
<sequence>MTEASAPLIDVDPRLLEVLVCPVTRGPLEYDRAKGELISRAAKLAYPIRDGVPIMLPEEARELEG</sequence>
<proteinExistence type="inferred from homology"/>
<protein>
    <recommendedName>
        <fullName evidence="1">UPF0434 protein CC_0108</fullName>
    </recommendedName>
</protein>
<evidence type="ECO:0000255" key="1">
    <source>
        <dbReference type="HAMAP-Rule" id="MF_01187"/>
    </source>
</evidence>
<reference key="1">
    <citation type="journal article" date="2001" name="Proc. Natl. Acad. Sci. U.S.A.">
        <title>Complete genome sequence of Caulobacter crescentus.</title>
        <authorList>
            <person name="Nierman W.C."/>
            <person name="Feldblyum T.V."/>
            <person name="Laub M.T."/>
            <person name="Paulsen I.T."/>
            <person name="Nelson K.E."/>
            <person name="Eisen J.A."/>
            <person name="Heidelberg J.F."/>
            <person name="Alley M.R.K."/>
            <person name="Ohta N."/>
            <person name="Maddock J.R."/>
            <person name="Potocka I."/>
            <person name="Nelson W.C."/>
            <person name="Newton A."/>
            <person name="Stephens C."/>
            <person name="Phadke N.D."/>
            <person name="Ely B."/>
            <person name="DeBoy R.T."/>
            <person name="Dodson R.J."/>
            <person name="Durkin A.S."/>
            <person name="Gwinn M.L."/>
            <person name="Haft D.H."/>
            <person name="Kolonay J.F."/>
            <person name="Smit J."/>
            <person name="Craven M.B."/>
            <person name="Khouri H.M."/>
            <person name="Shetty J."/>
            <person name="Berry K.J."/>
            <person name="Utterback T.R."/>
            <person name="Tran K."/>
            <person name="Wolf A.M."/>
            <person name="Vamathevan J.J."/>
            <person name="Ermolaeva M.D."/>
            <person name="White O."/>
            <person name="Salzberg S.L."/>
            <person name="Venter J.C."/>
            <person name="Shapiro L."/>
            <person name="Fraser C.M."/>
        </authorList>
    </citation>
    <scope>NUCLEOTIDE SEQUENCE [LARGE SCALE GENOMIC DNA]</scope>
    <source>
        <strain>ATCC 19089 / CIP 103742 / CB 15</strain>
    </source>
</reference>
<dbReference type="EMBL" id="AE005673">
    <property type="protein sequence ID" value="AAK22095.1"/>
    <property type="molecule type" value="Genomic_DNA"/>
</dbReference>
<dbReference type="PIR" id="C87262">
    <property type="entry name" value="C87262"/>
</dbReference>
<dbReference type="RefSeq" id="NP_418927.1">
    <property type="nucleotide sequence ID" value="NC_002696.2"/>
</dbReference>
<dbReference type="RefSeq" id="WP_010917997.1">
    <property type="nucleotide sequence ID" value="NC_002696.2"/>
</dbReference>
<dbReference type="SMR" id="Q9ABW2"/>
<dbReference type="STRING" id="190650.CC_0108"/>
<dbReference type="DNASU" id="944167"/>
<dbReference type="EnsemblBacteria" id="AAK22095">
    <property type="protein sequence ID" value="AAK22095"/>
    <property type="gene ID" value="CC_0108"/>
</dbReference>
<dbReference type="KEGG" id="ccr:CC_0108"/>
<dbReference type="PATRIC" id="fig|190650.5.peg.105"/>
<dbReference type="eggNOG" id="COG2835">
    <property type="taxonomic scope" value="Bacteria"/>
</dbReference>
<dbReference type="HOGENOM" id="CLU_155659_2_2_5"/>
<dbReference type="BioCyc" id="CAULO:CC0108-MONOMER"/>
<dbReference type="Proteomes" id="UP000001816">
    <property type="component" value="Chromosome"/>
</dbReference>
<dbReference type="GO" id="GO:0005829">
    <property type="term" value="C:cytosol"/>
    <property type="evidence" value="ECO:0007669"/>
    <property type="project" value="TreeGrafter"/>
</dbReference>
<dbReference type="FunFam" id="2.20.25.10:FF:000002">
    <property type="entry name" value="UPF0434 protein YcaR"/>
    <property type="match status" value="1"/>
</dbReference>
<dbReference type="Gene3D" id="2.20.25.10">
    <property type="match status" value="1"/>
</dbReference>
<dbReference type="HAMAP" id="MF_01187">
    <property type="entry name" value="UPF0434"/>
    <property type="match status" value="1"/>
</dbReference>
<dbReference type="InterPro" id="IPR005651">
    <property type="entry name" value="Trm112-like"/>
</dbReference>
<dbReference type="PANTHER" id="PTHR33505:SF4">
    <property type="entry name" value="PROTEIN PREY, MITOCHONDRIAL"/>
    <property type="match status" value="1"/>
</dbReference>
<dbReference type="PANTHER" id="PTHR33505">
    <property type="entry name" value="ZGC:162634"/>
    <property type="match status" value="1"/>
</dbReference>
<dbReference type="Pfam" id="PF03966">
    <property type="entry name" value="Trm112p"/>
    <property type="match status" value="1"/>
</dbReference>
<dbReference type="SUPFAM" id="SSF158997">
    <property type="entry name" value="Trm112p-like"/>
    <property type="match status" value="1"/>
</dbReference>
<feature type="chain" id="PRO_0000291080" description="UPF0434 protein CC_0108">
    <location>
        <begin position="1"/>
        <end position="65"/>
    </location>
</feature>
<gene>
    <name type="ordered locus">CC_0108</name>
</gene>
<keyword id="KW-1185">Reference proteome</keyword>
<name>Y108_CAUVC</name>
<organism>
    <name type="scientific">Caulobacter vibrioides (strain ATCC 19089 / CIP 103742 / CB 15)</name>
    <name type="common">Caulobacter crescentus</name>
    <dbReference type="NCBI Taxonomy" id="190650"/>
    <lineage>
        <taxon>Bacteria</taxon>
        <taxon>Pseudomonadati</taxon>
        <taxon>Pseudomonadota</taxon>
        <taxon>Alphaproteobacteria</taxon>
        <taxon>Caulobacterales</taxon>
        <taxon>Caulobacteraceae</taxon>
        <taxon>Caulobacter</taxon>
    </lineage>
</organism>
<comment type="similarity">
    <text evidence="1">Belongs to the UPF0434 family.</text>
</comment>